<proteinExistence type="inferred from homology"/>
<dbReference type="EMBL" id="CP001013">
    <property type="protein sequence ID" value="ACB34821.1"/>
    <property type="molecule type" value="Genomic_DNA"/>
</dbReference>
<dbReference type="RefSeq" id="WP_012347577.1">
    <property type="nucleotide sequence ID" value="NC_010524.1"/>
</dbReference>
<dbReference type="SMR" id="B1Y6I5"/>
<dbReference type="STRING" id="395495.Lcho_2556"/>
<dbReference type="KEGG" id="lch:Lcho_2556"/>
<dbReference type="eggNOG" id="COG2835">
    <property type="taxonomic scope" value="Bacteria"/>
</dbReference>
<dbReference type="HOGENOM" id="CLU_155659_3_1_4"/>
<dbReference type="OrthoDB" id="9812205at2"/>
<dbReference type="Proteomes" id="UP000001693">
    <property type="component" value="Chromosome"/>
</dbReference>
<dbReference type="GO" id="GO:0005829">
    <property type="term" value="C:cytosol"/>
    <property type="evidence" value="ECO:0007669"/>
    <property type="project" value="TreeGrafter"/>
</dbReference>
<dbReference type="FunFam" id="2.20.25.10:FF:000002">
    <property type="entry name" value="UPF0434 protein YcaR"/>
    <property type="match status" value="1"/>
</dbReference>
<dbReference type="Gene3D" id="2.20.25.10">
    <property type="match status" value="1"/>
</dbReference>
<dbReference type="HAMAP" id="MF_01187">
    <property type="entry name" value="UPF0434"/>
    <property type="match status" value="1"/>
</dbReference>
<dbReference type="InterPro" id="IPR005651">
    <property type="entry name" value="Trm112-like"/>
</dbReference>
<dbReference type="PANTHER" id="PTHR33505:SF4">
    <property type="entry name" value="PROTEIN PREY, MITOCHONDRIAL"/>
    <property type="match status" value="1"/>
</dbReference>
<dbReference type="PANTHER" id="PTHR33505">
    <property type="entry name" value="ZGC:162634"/>
    <property type="match status" value="1"/>
</dbReference>
<dbReference type="Pfam" id="PF03966">
    <property type="entry name" value="Trm112p"/>
    <property type="match status" value="1"/>
</dbReference>
<dbReference type="SUPFAM" id="SSF158997">
    <property type="entry name" value="Trm112p-like"/>
    <property type="match status" value="1"/>
</dbReference>
<organism>
    <name type="scientific">Leptothrix cholodnii (strain ATCC 51168 / LMG 8142 / SP-6)</name>
    <name type="common">Leptothrix discophora (strain SP-6)</name>
    <dbReference type="NCBI Taxonomy" id="395495"/>
    <lineage>
        <taxon>Bacteria</taxon>
        <taxon>Pseudomonadati</taxon>
        <taxon>Pseudomonadota</taxon>
        <taxon>Betaproteobacteria</taxon>
        <taxon>Burkholderiales</taxon>
        <taxon>Sphaerotilaceae</taxon>
        <taxon>Leptothrix</taxon>
    </lineage>
</organism>
<keyword id="KW-1185">Reference proteome</keyword>
<evidence type="ECO:0000255" key="1">
    <source>
        <dbReference type="HAMAP-Rule" id="MF_01187"/>
    </source>
</evidence>
<comment type="similarity">
    <text evidence="1">Belongs to the UPF0434 family.</text>
</comment>
<reference key="1">
    <citation type="submission" date="2008-03" db="EMBL/GenBank/DDBJ databases">
        <title>Complete sequence of Leptothrix cholodnii SP-6.</title>
        <authorList>
            <consortium name="US DOE Joint Genome Institute"/>
            <person name="Copeland A."/>
            <person name="Lucas S."/>
            <person name="Lapidus A."/>
            <person name="Glavina del Rio T."/>
            <person name="Dalin E."/>
            <person name="Tice H."/>
            <person name="Bruce D."/>
            <person name="Goodwin L."/>
            <person name="Pitluck S."/>
            <person name="Chertkov O."/>
            <person name="Brettin T."/>
            <person name="Detter J.C."/>
            <person name="Han C."/>
            <person name="Kuske C.R."/>
            <person name="Schmutz J."/>
            <person name="Larimer F."/>
            <person name="Land M."/>
            <person name="Hauser L."/>
            <person name="Kyrpides N."/>
            <person name="Lykidis A."/>
            <person name="Emerson D."/>
            <person name="Richardson P."/>
        </authorList>
    </citation>
    <scope>NUCLEOTIDE SEQUENCE [LARGE SCALE GENOMIC DNA]</scope>
    <source>
        <strain>ATCC 51168 / LMG 8142 / SP-6</strain>
    </source>
</reference>
<name>Y2556_LEPCP</name>
<sequence length="67" mass="7213">MDTRLMDLLVCPLCKGPLAHDHATHELVCKADRLAFPIRDGIAVMLESQARSIDQPAAESAPADLSS</sequence>
<protein>
    <recommendedName>
        <fullName evidence="1">UPF0434 protein Lcho_2556</fullName>
    </recommendedName>
</protein>
<feature type="chain" id="PRO_1000138316" description="UPF0434 protein Lcho_2556">
    <location>
        <begin position="1"/>
        <end position="67"/>
    </location>
</feature>
<accession>B1Y6I5</accession>
<gene>
    <name type="ordered locus">Lcho_2556</name>
</gene>